<organism>
    <name type="scientific">Neisseria meningitidis serogroup A / serotype 4A (strain DSM 15465 / Z2491)</name>
    <dbReference type="NCBI Taxonomy" id="122587"/>
    <lineage>
        <taxon>Bacteria</taxon>
        <taxon>Pseudomonadati</taxon>
        <taxon>Pseudomonadota</taxon>
        <taxon>Betaproteobacteria</taxon>
        <taxon>Neisseriales</taxon>
        <taxon>Neisseriaceae</taxon>
        <taxon>Neisseria</taxon>
    </lineage>
</organism>
<protein>
    <recommendedName>
        <fullName evidence="1">Co-chaperonin GroES</fullName>
    </recommendedName>
    <alternativeName>
        <fullName evidence="1">10 kDa chaperonin</fullName>
    </alternativeName>
    <alternativeName>
        <fullName evidence="1">Chaperonin-10</fullName>
        <shortName evidence="1">Cpn10</shortName>
    </alternativeName>
</protein>
<sequence length="96" mass="10315">MTIRPLHDRVVVKRLEAEEKTASGIVLPGAAAEKPDMGEVIAVGAGKIGKDGARRPLDVKVGDKIIFGKYSGQTVKADGEELLVMREEDIFGIVEK</sequence>
<evidence type="ECO:0000255" key="1">
    <source>
        <dbReference type="HAMAP-Rule" id="MF_00580"/>
    </source>
</evidence>
<dbReference type="EMBL" id="AL157959">
    <property type="protein sequence ID" value="CAM07753.1"/>
    <property type="molecule type" value="Genomic_DNA"/>
</dbReference>
<dbReference type="PIR" id="G81964">
    <property type="entry name" value="G81964"/>
</dbReference>
<dbReference type="RefSeq" id="WP_002214868.1">
    <property type="nucleotide sequence ID" value="NC_003116.1"/>
</dbReference>
<dbReference type="SMR" id="Q9JWA3"/>
<dbReference type="EnsemblBacteria" id="CAM07753">
    <property type="protein sequence ID" value="CAM07753"/>
    <property type="gene ID" value="NMA0472"/>
</dbReference>
<dbReference type="KEGG" id="nma:NMA0472"/>
<dbReference type="HOGENOM" id="CLU_132825_2_0_4"/>
<dbReference type="Proteomes" id="UP000000626">
    <property type="component" value="Chromosome"/>
</dbReference>
<dbReference type="GO" id="GO:0005737">
    <property type="term" value="C:cytoplasm"/>
    <property type="evidence" value="ECO:0007669"/>
    <property type="project" value="UniProtKB-SubCell"/>
</dbReference>
<dbReference type="GO" id="GO:0005524">
    <property type="term" value="F:ATP binding"/>
    <property type="evidence" value="ECO:0007669"/>
    <property type="project" value="InterPro"/>
</dbReference>
<dbReference type="GO" id="GO:0046872">
    <property type="term" value="F:metal ion binding"/>
    <property type="evidence" value="ECO:0007669"/>
    <property type="project" value="TreeGrafter"/>
</dbReference>
<dbReference type="GO" id="GO:0044183">
    <property type="term" value="F:protein folding chaperone"/>
    <property type="evidence" value="ECO:0007669"/>
    <property type="project" value="InterPro"/>
</dbReference>
<dbReference type="GO" id="GO:0051087">
    <property type="term" value="F:protein-folding chaperone binding"/>
    <property type="evidence" value="ECO:0007669"/>
    <property type="project" value="TreeGrafter"/>
</dbReference>
<dbReference type="GO" id="GO:0051082">
    <property type="term" value="F:unfolded protein binding"/>
    <property type="evidence" value="ECO:0007669"/>
    <property type="project" value="TreeGrafter"/>
</dbReference>
<dbReference type="GO" id="GO:0051085">
    <property type="term" value="P:chaperone cofactor-dependent protein refolding"/>
    <property type="evidence" value="ECO:0007669"/>
    <property type="project" value="TreeGrafter"/>
</dbReference>
<dbReference type="CDD" id="cd00320">
    <property type="entry name" value="cpn10"/>
    <property type="match status" value="1"/>
</dbReference>
<dbReference type="FunFam" id="2.30.33.40:FF:000001">
    <property type="entry name" value="10 kDa chaperonin"/>
    <property type="match status" value="1"/>
</dbReference>
<dbReference type="Gene3D" id="2.30.33.40">
    <property type="entry name" value="GroES chaperonin"/>
    <property type="match status" value="1"/>
</dbReference>
<dbReference type="HAMAP" id="MF_00580">
    <property type="entry name" value="CH10"/>
    <property type="match status" value="1"/>
</dbReference>
<dbReference type="InterPro" id="IPR020818">
    <property type="entry name" value="Chaperonin_GroES"/>
</dbReference>
<dbReference type="InterPro" id="IPR037124">
    <property type="entry name" value="Chaperonin_GroES_sf"/>
</dbReference>
<dbReference type="InterPro" id="IPR018369">
    <property type="entry name" value="Chaprnonin_Cpn10_CS"/>
</dbReference>
<dbReference type="InterPro" id="IPR011032">
    <property type="entry name" value="GroES-like_sf"/>
</dbReference>
<dbReference type="NCBIfam" id="NF001527">
    <property type="entry name" value="PRK00364.1-2"/>
    <property type="match status" value="1"/>
</dbReference>
<dbReference type="NCBIfam" id="NF001531">
    <property type="entry name" value="PRK00364.2-2"/>
    <property type="match status" value="1"/>
</dbReference>
<dbReference type="NCBIfam" id="NF001533">
    <property type="entry name" value="PRK00364.2-4"/>
    <property type="match status" value="1"/>
</dbReference>
<dbReference type="PANTHER" id="PTHR10772">
    <property type="entry name" value="10 KDA HEAT SHOCK PROTEIN"/>
    <property type="match status" value="1"/>
</dbReference>
<dbReference type="PANTHER" id="PTHR10772:SF58">
    <property type="entry name" value="CO-CHAPERONIN GROES"/>
    <property type="match status" value="1"/>
</dbReference>
<dbReference type="Pfam" id="PF00166">
    <property type="entry name" value="Cpn10"/>
    <property type="match status" value="1"/>
</dbReference>
<dbReference type="PRINTS" id="PR00297">
    <property type="entry name" value="CHAPERONIN10"/>
</dbReference>
<dbReference type="SMART" id="SM00883">
    <property type="entry name" value="Cpn10"/>
    <property type="match status" value="1"/>
</dbReference>
<dbReference type="SUPFAM" id="SSF50129">
    <property type="entry name" value="GroES-like"/>
    <property type="match status" value="1"/>
</dbReference>
<dbReference type="PROSITE" id="PS00681">
    <property type="entry name" value="CHAPERONINS_CPN10"/>
    <property type="match status" value="1"/>
</dbReference>
<reference key="1">
    <citation type="journal article" date="2000" name="Nature">
        <title>Complete DNA sequence of a serogroup A strain of Neisseria meningitidis Z2491.</title>
        <authorList>
            <person name="Parkhill J."/>
            <person name="Achtman M."/>
            <person name="James K.D."/>
            <person name="Bentley S.D."/>
            <person name="Churcher C.M."/>
            <person name="Klee S.R."/>
            <person name="Morelli G."/>
            <person name="Basham D."/>
            <person name="Brown D."/>
            <person name="Chillingworth T."/>
            <person name="Davies R.M."/>
            <person name="Davis P."/>
            <person name="Devlin K."/>
            <person name="Feltwell T."/>
            <person name="Hamlin N."/>
            <person name="Holroyd S."/>
            <person name="Jagels K."/>
            <person name="Leather S."/>
            <person name="Moule S."/>
            <person name="Mungall K.L."/>
            <person name="Quail M.A."/>
            <person name="Rajandream M.A."/>
            <person name="Rutherford K.M."/>
            <person name="Simmonds M."/>
            <person name="Skelton J."/>
            <person name="Whitehead S."/>
            <person name="Spratt B.G."/>
            <person name="Barrell B.G."/>
        </authorList>
    </citation>
    <scope>NUCLEOTIDE SEQUENCE [LARGE SCALE GENOMIC DNA]</scope>
    <source>
        <strain>DSM 15465 / Z2491</strain>
    </source>
</reference>
<gene>
    <name evidence="1" type="primary">groES</name>
    <name evidence="1" type="synonym">groS</name>
    <name type="ordered locus">NMA0472</name>
</gene>
<feature type="chain" id="PRO_0000174792" description="Co-chaperonin GroES">
    <location>
        <begin position="1"/>
        <end position="96"/>
    </location>
</feature>
<comment type="function">
    <text evidence="1">Together with the chaperonin GroEL, plays an essential role in assisting protein folding. The GroEL-GroES system forms a nano-cage that allows encapsulation of the non-native substrate proteins and provides a physical environment optimized to promote and accelerate protein folding. GroES binds to the apical surface of the GroEL ring, thereby capping the opening of the GroEL channel.</text>
</comment>
<comment type="subunit">
    <text evidence="1">Heptamer of 7 subunits arranged in a ring. Interacts with the chaperonin GroEL.</text>
</comment>
<comment type="subcellular location">
    <subcellularLocation>
        <location evidence="1">Cytoplasm</location>
    </subcellularLocation>
</comment>
<comment type="similarity">
    <text evidence="1">Belongs to the GroES chaperonin family.</text>
</comment>
<keyword id="KW-0143">Chaperone</keyword>
<keyword id="KW-0963">Cytoplasm</keyword>
<accession>Q9JWA3</accession>
<accession>A1IPT2</accession>
<proteinExistence type="inferred from homology"/>
<name>CH10_NEIMA</name>